<protein>
    <recommendedName>
        <fullName evidence="1">Uncharacterized MFS-type transporter BURPS1106A_3201</fullName>
    </recommendedName>
</protein>
<proteinExistence type="inferred from homology"/>
<accession>A3NYL8</accession>
<sequence length="407" mass="41306">MSADSADSVPSPRSAFATTLQIVSVVSFTFICYLTIGLPLAVLPGFVHDELGFSAIVAGAAISVQYFATLASRPLAGRCADTLGPKRTVLRGLAACGASGALLLSAFAFARWPAASIVLLVASRLVLGIGESLVGTGAILWGIGRVGTAHNARVISWNGIATYGALAIGAPVGVAISHALIPAVLGMLVIALAALGYYLARLITPVPLVHGERMSYASVLTRVLPHGLGLALGSAGFGSIATFITLYYAARHWPNAALSLTVFGTLFIGARLLFANTIKTHGGFRVAIVSFAFECAGLLMLWLAPVPHVALVGAALTGFGFALIFPALGVEAVALVPPASRGAALSAYSVFLDLSLGITGPLAGYVAGAFGYPQVFLCAAVAAAAGVALSTVLYQRQARLSGSGAAA</sequence>
<comment type="subcellular location">
    <subcellularLocation>
        <location evidence="1">Cell inner membrane</location>
        <topology evidence="1">Multi-pass membrane protein</topology>
    </subcellularLocation>
</comment>
<comment type="similarity">
    <text evidence="1">Belongs to the major facilitator superfamily. YhhS family.</text>
</comment>
<feature type="chain" id="PRO_1000137231" description="Uncharacterized MFS-type transporter BURPS1106A_3201">
    <location>
        <begin position="1"/>
        <end position="407"/>
    </location>
</feature>
<feature type="transmembrane region" description="Helical" evidence="1">
    <location>
        <begin position="22"/>
        <end position="42"/>
    </location>
</feature>
<feature type="transmembrane region" description="Helical" evidence="1">
    <location>
        <begin position="51"/>
        <end position="71"/>
    </location>
</feature>
<feature type="transmembrane region" description="Helical" evidence="1">
    <location>
        <begin position="101"/>
        <end position="121"/>
    </location>
</feature>
<feature type="transmembrane region" description="Helical" evidence="1">
    <location>
        <begin position="126"/>
        <end position="146"/>
    </location>
</feature>
<feature type="transmembrane region" description="Helical" evidence="1">
    <location>
        <begin position="154"/>
        <end position="174"/>
    </location>
</feature>
<feature type="transmembrane region" description="Helical" evidence="1">
    <location>
        <begin position="179"/>
        <end position="199"/>
    </location>
</feature>
<feature type="transmembrane region" description="Helical" evidence="1">
    <location>
        <begin position="227"/>
        <end position="247"/>
    </location>
</feature>
<feature type="transmembrane region" description="Helical" evidence="1">
    <location>
        <begin position="258"/>
        <end position="278"/>
    </location>
</feature>
<feature type="transmembrane region" description="Helical" evidence="1">
    <location>
        <begin position="286"/>
        <end position="306"/>
    </location>
</feature>
<feature type="transmembrane region" description="Helical" evidence="1">
    <location>
        <begin position="309"/>
        <end position="329"/>
    </location>
</feature>
<feature type="transmembrane region" description="Helical" evidence="1">
    <location>
        <begin position="347"/>
        <end position="367"/>
    </location>
</feature>
<feature type="transmembrane region" description="Helical" evidence="1">
    <location>
        <begin position="369"/>
        <end position="389"/>
    </location>
</feature>
<organism>
    <name type="scientific">Burkholderia pseudomallei (strain 1106a)</name>
    <dbReference type="NCBI Taxonomy" id="357348"/>
    <lineage>
        <taxon>Bacteria</taxon>
        <taxon>Pseudomonadati</taxon>
        <taxon>Pseudomonadota</taxon>
        <taxon>Betaproteobacteria</taxon>
        <taxon>Burkholderiales</taxon>
        <taxon>Burkholderiaceae</taxon>
        <taxon>Burkholderia</taxon>
        <taxon>pseudomallei group</taxon>
    </lineage>
</organism>
<keyword id="KW-0997">Cell inner membrane</keyword>
<keyword id="KW-1003">Cell membrane</keyword>
<keyword id="KW-0472">Membrane</keyword>
<keyword id="KW-0812">Transmembrane</keyword>
<keyword id="KW-1133">Transmembrane helix</keyword>
<keyword id="KW-0813">Transport</keyword>
<name>Y3201_BURP0</name>
<evidence type="ECO:0000255" key="1">
    <source>
        <dbReference type="HAMAP-Rule" id="MF_01118"/>
    </source>
</evidence>
<reference key="1">
    <citation type="journal article" date="2010" name="Genome Biol. Evol.">
        <title>Continuing evolution of Burkholderia mallei through genome reduction and large-scale rearrangements.</title>
        <authorList>
            <person name="Losada L."/>
            <person name="Ronning C.M."/>
            <person name="DeShazer D."/>
            <person name="Woods D."/>
            <person name="Fedorova N."/>
            <person name="Kim H.S."/>
            <person name="Shabalina S.A."/>
            <person name="Pearson T.R."/>
            <person name="Brinkac L."/>
            <person name="Tan P."/>
            <person name="Nandi T."/>
            <person name="Crabtree J."/>
            <person name="Badger J."/>
            <person name="Beckstrom-Sternberg S."/>
            <person name="Saqib M."/>
            <person name="Schutzer S.E."/>
            <person name="Keim P."/>
            <person name="Nierman W.C."/>
        </authorList>
    </citation>
    <scope>NUCLEOTIDE SEQUENCE [LARGE SCALE GENOMIC DNA]</scope>
    <source>
        <strain>1106a</strain>
    </source>
</reference>
<gene>
    <name type="ordered locus">BURPS1106A_3201</name>
</gene>
<dbReference type="EMBL" id="CP000572">
    <property type="protein sequence ID" value="ABN91934.1"/>
    <property type="molecule type" value="Genomic_DNA"/>
</dbReference>
<dbReference type="RefSeq" id="WP_004534024.1">
    <property type="nucleotide sequence ID" value="NC_009076.1"/>
</dbReference>
<dbReference type="SMR" id="A3NYL8"/>
<dbReference type="KEGG" id="bpl:BURPS1106A_3201"/>
<dbReference type="HOGENOM" id="CLU_001265_10_3_4"/>
<dbReference type="Proteomes" id="UP000006738">
    <property type="component" value="Chromosome I"/>
</dbReference>
<dbReference type="GO" id="GO:0005886">
    <property type="term" value="C:plasma membrane"/>
    <property type="evidence" value="ECO:0007669"/>
    <property type="project" value="UniProtKB-SubCell"/>
</dbReference>
<dbReference type="GO" id="GO:0022857">
    <property type="term" value="F:transmembrane transporter activity"/>
    <property type="evidence" value="ECO:0007669"/>
    <property type="project" value="UniProtKB-UniRule"/>
</dbReference>
<dbReference type="CDD" id="cd17489">
    <property type="entry name" value="MFS_YfcJ_like"/>
    <property type="match status" value="1"/>
</dbReference>
<dbReference type="Gene3D" id="1.20.1250.20">
    <property type="entry name" value="MFS general substrate transporter like domains"/>
    <property type="match status" value="1"/>
</dbReference>
<dbReference type="HAMAP" id="MF_01118">
    <property type="entry name" value="MFS_YhhS"/>
    <property type="match status" value="1"/>
</dbReference>
<dbReference type="InterPro" id="IPR011701">
    <property type="entry name" value="MFS"/>
</dbReference>
<dbReference type="InterPro" id="IPR020846">
    <property type="entry name" value="MFS_dom"/>
</dbReference>
<dbReference type="InterPro" id="IPR036259">
    <property type="entry name" value="MFS_trans_sf"/>
</dbReference>
<dbReference type="InterPro" id="IPR050171">
    <property type="entry name" value="MFS_Transporters"/>
</dbReference>
<dbReference type="InterPro" id="IPR023008">
    <property type="entry name" value="MFS_YhhS-like"/>
</dbReference>
<dbReference type="NCBIfam" id="NF003477">
    <property type="entry name" value="PRK05122.1"/>
    <property type="match status" value="1"/>
</dbReference>
<dbReference type="NCBIfam" id="NF009048">
    <property type="entry name" value="PRK12382.1"/>
    <property type="match status" value="1"/>
</dbReference>
<dbReference type="PANTHER" id="PTHR23517:SF13">
    <property type="entry name" value="MAJOR FACILITATOR SUPERFAMILY MFS_1"/>
    <property type="match status" value="1"/>
</dbReference>
<dbReference type="PANTHER" id="PTHR23517">
    <property type="entry name" value="RESISTANCE PROTEIN MDTM, PUTATIVE-RELATED-RELATED"/>
    <property type="match status" value="1"/>
</dbReference>
<dbReference type="Pfam" id="PF07690">
    <property type="entry name" value="MFS_1"/>
    <property type="match status" value="1"/>
</dbReference>
<dbReference type="SUPFAM" id="SSF103473">
    <property type="entry name" value="MFS general substrate transporter"/>
    <property type="match status" value="1"/>
</dbReference>
<dbReference type="PROSITE" id="PS50850">
    <property type="entry name" value="MFS"/>
    <property type="match status" value="1"/>
</dbReference>